<comment type="catalytic activity">
    <reaction evidence="1">
        <text>tRNA(Cys) + L-cysteine + ATP = L-cysteinyl-tRNA(Cys) + AMP + diphosphate</text>
        <dbReference type="Rhea" id="RHEA:17773"/>
        <dbReference type="Rhea" id="RHEA-COMP:9661"/>
        <dbReference type="Rhea" id="RHEA-COMP:9679"/>
        <dbReference type="ChEBI" id="CHEBI:30616"/>
        <dbReference type="ChEBI" id="CHEBI:33019"/>
        <dbReference type="ChEBI" id="CHEBI:35235"/>
        <dbReference type="ChEBI" id="CHEBI:78442"/>
        <dbReference type="ChEBI" id="CHEBI:78517"/>
        <dbReference type="ChEBI" id="CHEBI:456215"/>
        <dbReference type="EC" id="6.1.1.16"/>
    </reaction>
</comment>
<comment type="cofactor">
    <cofactor evidence="1">
        <name>Zn(2+)</name>
        <dbReference type="ChEBI" id="CHEBI:29105"/>
    </cofactor>
    <text evidence="1">Binds 1 zinc ion per subunit.</text>
</comment>
<comment type="subunit">
    <text evidence="1">Monomer.</text>
</comment>
<comment type="subcellular location">
    <subcellularLocation>
        <location evidence="1">Cytoplasm</location>
    </subcellularLocation>
</comment>
<comment type="similarity">
    <text evidence="1">Belongs to the class-I aminoacyl-tRNA synthetase family.</text>
</comment>
<name>SYC_CAMJD</name>
<organism>
    <name type="scientific">Campylobacter jejuni subsp. doylei (strain ATCC BAA-1458 / RM4099 / 269.97)</name>
    <dbReference type="NCBI Taxonomy" id="360109"/>
    <lineage>
        <taxon>Bacteria</taxon>
        <taxon>Pseudomonadati</taxon>
        <taxon>Campylobacterota</taxon>
        <taxon>Epsilonproteobacteria</taxon>
        <taxon>Campylobacterales</taxon>
        <taxon>Campylobacteraceae</taxon>
        <taxon>Campylobacter</taxon>
    </lineage>
</organism>
<evidence type="ECO:0000255" key="1">
    <source>
        <dbReference type="HAMAP-Rule" id="MF_00041"/>
    </source>
</evidence>
<accession>A7H447</accession>
<dbReference type="EC" id="6.1.1.16" evidence="1"/>
<dbReference type="EMBL" id="CP000768">
    <property type="protein sequence ID" value="ABS43913.1"/>
    <property type="molecule type" value="Genomic_DNA"/>
</dbReference>
<dbReference type="SMR" id="A7H447"/>
<dbReference type="KEGG" id="cjd:JJD26997_1208"/>
<dbReference type="HOGENOM" id="CLU_013528_0_1_7"/>
<dbReference type="Proteomes" id="UP000002302">
    <property type="component" value="Chromosome"/>
</dbReference>
<dbReference type="GO" id="GO:0005829">
    <property type="term" value="C:cytosol"/>
    <property type="evidence" value="ECO:0007669"/>
    <property type="project" value="TreeGrafter"/>
</dbReference>
<dbReference type="GO" id="GO:0005524">
    <property type="term" value="F:ATP binding"/>
    <property type="evidence" value="ECO:0007669"/>
    <property type="project" value="UniProtKB-UniRule"/>
</dbReference>
<dbReference type="GO" id="GO:0004817">
    <property type="term" value="F:cysteine-tRNA ligase activity"/>
    <property type="evidence" value="ECO:0007669"/>
    <property type="project" value="UniProtKB-UniRule"/>
</dbReference>
<dbReference type="GO" id="GO:0008270">
    <property type="term" value="F:zinc ion binding"/>
    <property type="evidence" value="ECO:0007669"/>
    <property type="project" value="UniProtKB-UniRule"/>
</dbReference>
<dbReference type="GO" id="GO:0006423">
    <property type="term" value="P:cysteinyl-tRNA aminoacylation"/>
    <property type="evidence" value="ECO:0007669"/>
    <property type="project" value="UniProtKB-UniRule"/>
</dbReference>
<dbReference type="CDD" id="cd00672">
    <property type="entry name" value="CysRS_core"/>
    <property type="match status" value="1"/>
</dbReference>
<dbReference type="Gene3D" id="1.20.120.1910">
    <property type="entry name" value="Cysteine-tRNA ligase, C-terminal anti-codon recognition domain"/>
    <property type="match status" value="1"/>
</dbReference>
<dbReference type="Gene3D" id="3.40.50.620">
    <property type="entry name" value="HUPs"/>
    <property type="match status" value="1"/>
</dbReference>
<dbReference type="HAMAP" id="MF_00041">
    <property type="entry name" value="Cys_tRNA_synth"/>
    <property type="match status" value="1"/>
</dbReference>
<dbReference type="InterPro" id="IPR015803">
    <property type="entry name" value="Cys-tRNA-ligase"/>
</dbReference>
<dbReference type="InterPro" id="IPR015273">
    <property type="entry name" value="Cys-tRNA-synt_Ia_DALR"/>
</dbReference>
<dbReference type="InterPro" id="IPR024909">
    <property type="entry name" value="Cys-tRNA/MSH_ligase"/>
</dbReference>
<dbReference type="InterPro" id="IPR014729">
    <property type="entry name" value="Rossmann-like_a/b/a_fold"/>
</dbReference>
<dbReference type="InterPro" id="IPR032678">
    <property type="entry name" value="tRNA-synt_1_cat_dom"/>
</dbReference>
<dbReference type="InterPro" id="IPR009080">
    <property type="entry name" value="tRNAsynth_Ia_anticodon-bd"/>
</dbReference>
<dbReference type="NCBIfam" id="TIGR00435">
    <property type="entry name" value="cysS"/>
    <property type="match status" value="1"/>
</dbReference>
<dbReference type="PANTHER" id="PTHR10890:SF3">
    <property type="entry name" value="CYSTEINE--TRNA LIGASE, CYTOPLASMIC"/>
    <property type="match status" value="1"/>
</dbReference>
<dbReference type="PANTHER" id="PTHR10890">
    <property type="entry name" value="CYSTEINYL-TRNA SYNTHETASE"/>
    <property type="match status" value="1"/>
</dbReference>
<dbReference type="Pfam" id="PF09190">
    <property type="entry name" value="DALR_2"/>
    <property type="match status" value="1"/>
</dbReference>
<dbReference type="Pfam" id="PF01406">
    <property type="entry name" value="tRNA-synt_1e"/>
    <property type="match status" value="1"/>
</dbReference>
<dbReference type="PRINTS" id="PR00983">
    <property type="entry name" value="TRNASYNTHCYS"/>
</dbReference>
<dbReference type="SUPFAM" id="SSF47323">
    <property type="entry name" value="Anticodon-binding domain of a subclass of class I aminoacyl-tRNA synthetases"/>
    <property type="match status" value="1"/>
</dbReference>
<dbReference type="SUPFAM" id="SSF52374">
    <property type="entry name" value="Nucleotidylyl transferase"/>
    <property type="match status" value="1"/>
</dbReference>
<reference key="1">
    <citation type="submission" date="2007-07" db="EMBL/GenBank/DDBJ databases">
        <title>Complete genome sequence of Campylobacter jejuni subsp doylei 269.97 isolated from human blood.</title>
        <authorList>
            <person name="Fouts D.E."/>
            <person name="Mongodin E.F."/>
            <person name="Puiu D."/>
            <person name="Sebastian Y."/>
            <person name="Miller W.G."/>
            <person name="Mandrell R.E."/>
            <person name="Lastovica A.J."/>
            <person name="Nelson K.E."/>
        </authorList>
    </citation>
    <scope>NUCLEOTIDE SEQUENCE [LARGE SCALE GENOMIC DNA]</scope>
    <source>
        <strain>ATCC BAA-1458 / RM4099 / 269.97</strain>
    </source>
</reference>
<sequence length="462" mass="53574">MRLLDSATKEKIKLDKKDISIYLCGPTVYDDAHLGHARSSVCFDLLRRVLLANGNRVKFARNYTDIDDKILKKMAQSCQTLEEITEFYIKSYEEDMRTLNVLDPDFKPRATHYIIAMLDLIKKLAKDGFVYTLEDGIYFDTSKDEKYLSLSSRNLEENISRLSNEVQKRNESDFVLWKFDENFYESEFGKGRPGWHTECVAMIDSIFENTLDIHAGGIDLLFPHHENEAAQCRCGCKRKLANIWLHNGFVKIDGEKMSKSLNNSFFIKDALKEFMGEALRFYLLSSHYRSHFNYSLSDLENAKKRLDKIYRLKKRLDLGEISDFDVLNDIEIKSEIAKQILEILNDDLNISKALALLDDFISNANLELDKESKNKILKQNIKEALSELAKIFGFGFMDATLYFQWGVSKEEREEIEKLILERTEAKKNKDFNTADAIREQLSSKKITLLDTPNGTIWEKMNA</sequence>
<protein>
    <recommendedName>
        <fullName evidence="1">Cysteine--tRNA ligase</fullName>
        <ecNumber evidence="1">6.1.1.16</ecNumber>
    </recommendedName>
    <alternativeName>
        <fullName evidence="1">Cysteinyl-tRNA synthetase</fullName>
        <shortName evidence="1">CysRS</shortName>
    </alternativeName>
</protein>
<gene>
    <name evidence="1" type="primary">cysS</name>
    <name type="ordered locus">JJD26997_1208</name>
</gene>
<proteinExistence type="inferred from homology"/>
<keyword id="KW-0030">Aminoacyl-tRNA synthetase</keyword>
<keyword id="KW-0067">ATP-binding</keyword>
<keyword id="KW-0963">Cytoplasm</keyword>
<keyword id="KW-0436">Ligase</keyword>
<keyword id="KW-0479">Metal-binding</keyword>
<keyword id="KW-0547">Nucleotide-binding</keyword>
<keyword id="KW-0648">Protein biosynthesis</keyword>
<keyword id="KW-0862">Zinc</keyword>
<feature type="chain" id="PRO_1000006579" description="Cysteine--tRNA ligase">
    <location>
        <begin position="1"/>
        <end position="462"/>
    </location>
</feature>
<feature type="short sequence motif" description="'HIGH' region">
    <location>
        <begin position="26"/>
        <end position="36"/>
    </location>
</feature>
<feature type="short sequence motif" description="'KMSKS' region">
    <location>
        <begin position="256"/>
        <end position="260"/>
    </location>
</feature>
<feature type="binding site" evidence="1">
    <location>
        <position position="24"/>
    </location>
    <ligand>
        <name>Zn(2+)</name>
        <dbReference type="ChEBI" id="CHEBI:29105"/>
    </ligand>
</feature>
<feature type="binding site" evidence="1">
    <location>
        <position position="199"/>
    </location>
    <ligand>
        <name>Zn(2+)</name>
        <dbReference type="ChEBI" id="CHEBI:29105"/>
    </ligand>
</feature>
<feature type="binding site" evidence="1">
    <location>
        <position position="224"/>
    </location>
    <ligand>
        <name>Zn(2+)</name>
        <dbReference type="ChEBI" id="CHEBI:29105"/>
    </ligand>
</feature>
<feature type="binding site" evidence="1">
    <location>
        <position position="228"/>
    </location>
    <ligand>
        <name>Zn(2+)</name>
        <dbReference type="ChEBI" id="CHEBI:29105"/>
    </ligand>
</feature>
<feature type="binding site" evidence="1">
    <location>
        <position position="259"/>
    </location>
    <ligand>
        <name>ATP</name>
        <dbReference type="ChEBI" id="CHEBI:30616"/>
    </ligand>
</feature>